<name>TGT_ECOLI</name>
<accession>P0A847</accession>
<accession>P19675</accession>
<accession>P19676</accession>
<accession>P78226</accession>
<accession>Q2MC20</accession>
<accession>Q47627</accession>
<feature type="chain" id="PRO_0000135471" description="Queuine tRNA-ribosyltransferase">
    <location>
        <begin position="1"/>
        <end position="375"/>
    </location>
</feature>
<feature type="region of interest" description="RNA binding" evidence="1">
    <location>
        <begin position="245"/>
        <end position="251"/>
    </location>
</feature>
<feature type="region of interest" description="RNA binding; important for wobble base 34 recognition" evidence="1">
    <location>
        <begin position="269"/>
        <end position="273"/>
    </location>
</feature>
<feature type="active site" description="Proton acceptor" evidence="1 7">
    <location>
        <position position="89"/>
    </location>
</feature>
<feature type="active site" description="Nucleophile" evidence="1 8">
    <location>
        <position position="264"/>
    </location>
</feature>
<feature type="binding site" evidence="1">
    <location>
        <begin position="89"/>
        <end position="93"/>
    </location>
    <ligand>
        <name>substrate</name>
    </ligand>
</feature>
<feature type="binding site" evidence="1">
    <location>
        <position position="143"/>
    </location>
    <ligand>
        <name>substrate</name>
    </ligand>
</feature>
<feature type="binding site" evidence="1">
    <location>
        <position position="187"/>
    </location>
    <ligand>
        <name>substrate</name>
    </ligand>
</feature>
<feature type="binding site" evidence="1">
    <location>
        <position position="214"/>
    </location>
    <ligand>
        <name>substrate</name>
    </ligand>
</feature>
<feature type="binding site" evidence="1 10">
    <location>
        <position position="302"/>
    </location>
    <ligand>
        <name>Zn(2+)</name>
        <dbReference type="ChEBI" id="CHEBI:29105"/>
    </ligand>
</feature>
<feature type="binding site" evidence="1 10">
    <location>
        <position position="304"/>
    </location>
    <ligand>
        <name>Zn(2+)</name>
        <dbReference type="ChEBI" id="CHEBI:29105"/>
    </ligand>
</feature>
<feature type="binding site" evidence="1 10">
    <location>
        <position position="307"/>
    </location>
    <ligand>
        <name>Zn(2+)</name>
        <dbReference type="ChEBI" id="CHEBI:29105"/>
    </ligand>
</feature>
<feature type="binding site" evidence="1">
    <location>
        <position position="333"/>
    </location>
    <ligand>
        <name>Zn(2+)</name>
        <dbReference type="ChEBI" id="CHEBI:29105"/>
    </ligand>
</feature>
<feature type="mutagenesis site" description="Slight loss of activity." evidence="4">
    <original>C</original>
    <variation>A</variation>
    <location>
        <position position="28"/>
    </location>
</feature>
<feature type="mutagenesis site" description="Reduces catalytic activity by 51%." evidence="2">
    <original>D</original>
    <variation>E</variation>
    <location>
        <position position="89"/>
    </location>
</feature>
<feature type="mutagenesis site" description="Loss of activity." evidence="5">
    <original>S</original>
    <variation>A</variation>
    <location>
        <position position="90"/>
    </location>
</feature>
<feature type="mutagenesis site" description="Loss of activity." evidence="5">
    <original>S</original>
    <variation>C</variation>
    <location>
        <position position="90"/>
    </location>
</feature>
<feature type="mutagenesis site" description="Loss of activity." evidence="5">
    <original>S</original>
    <variation>F</variation>
    <location>
        <position position="90"/>
    </location>
</feature>
<feature type="mutagenesis site" description="No loss of activity." evidence="4">
    <original>C</original>
    <variation>A</variation>
    <location>
        <position position="145"/>
    </location>
</feature>
<feature type="mutagenesis site" description="Slight loss of activity." evidence="4">
    <original>C</original>
    <variation>A</variation>
    <location>
        <position position="232"/>
    </location>
</feature>
<feature type="mutagenesis site" description="Loss of catalytic activity." evidence="3">
    <original>D</original>
    <variation>A</variation>
    <variation>N</variation>
    <variation>Q</variation>
    <variation>K</variation>
    <variation>H</variation>
    <location>
        <position position="264"/>
    </location>
</feature>
<feature type="mutagenesis site" description="Reduces catalytic activity by 88%." evidence="3">
    <original>D</original>
    <variation>E</variation>
    <location>
        <position position="264"/>
    </location>
</feature>
<feature type="mutagenesis site" description="Significant loss of activity." evidence="4">
    <original>C</original>
    <variation>A</variation>
    <location>
        <position position="265"/>
    </location>
</feature>
<feature type="mutagenesis site" description="Loss of activity." evidence="4">
    <original>C</original>
    <variation>A</variation>
    <location>
        <position position="302"/>
    </location>
</feature>
<feature type="mutagenesis site" description="Loss of activity." evidence="4">
    <original>C</original>
    <variation>A</variation>
    <location>
        <position position="304"/>
    </location>
</feature>
<feature type="mutagenesis site" description="Loss of activity." evidence="4">
    <original>C</original>
    <variation>A</variation>
    <location>
        <position position="307"/>
    </location>
</feature>
<feature type="mutagenesis site" description="Slight loss of activity." evidence="4">
    <original>H</original>
    <variation>A</variation>
    <location>
        <position position="316"/>
    </location>
</feature>
<feature type="mutagenesis site" description="Loss of activity." evidence="4">
    <original>H</original>
    <variation>A</variation>
    <location>
        <position position="317"/>
    </location>
</feature>
<feature type="mutagenesis site" description="No loss of activity." evidence="4">
    <original>C</original>
    <variation>A</variation>
    <location>
        <position position="321"/>
    </location>
</feature>
<feature type="sequence conflict" description="In Ref. 1 and 2." evidence="6" ref="1 2">
    <original>IL</original>
    <variation>MV</variation>
    <location>
        <begin position="54"/>
        <end position="55"/>
    </location>
</feature>
<protein>
    <recommendedName>
        <fullName evidence="1">Queuine tRNA-ribosyltransferase</fullName>
        <ecNumber evidence="1 2 3">2.4.2.29</ecNumber>
    </recommendedName>
    <alternativeName>
        <fullName evidence="1">Guanine insertion enzyme</fullName>
    </alternativeName>
    <alternativeName>
        <fullName evidence="1">tRNA-guanine transglycosylase</fullName>
    </alternativeName>
</protein>
<organism>
    <name type="scientific">Escherichia coli (strain K12)</name>
    <dbReference type="NCBI Taxonomy" id="83333"/>
    <lineage>
        <taxon>Bacteria</taxon>
        <taxon>Pseudomonadati</taxon>
        <taxon>Pseudomonadota</taxon>
        <taxon>Gammaproteobacteria</taxon>
        <taxon>Enterobacterales</taxon>
        <taxon>Enterobacteriaceae</taxon>
        <taxon>Escherichia</taxon>
    </lineage>
</organism>
<gene>
    <name evidence="1" type="primary">tgt</name>
    <name type="ordered locus">b0406</name>
    <name type="ordered locus">JW0396</name>
</gene>
<evidence type="ECO:0000255" key="1">
    <source>
        <dbReference type="HAMAP-Rule" id="MF_00168"/>
    </source>
</evidence>
<evidence type="ECO:0000269" key="2">
    <source>
    </source>
</evidence>
<evidence type="ECO:0000269" key="3">
    <source>
    </source>
</evidence>
<evidence type="ECO:0000269" key="4">
    <source>
    </source>
</evidence>
<evidence type="ECO:0000269" key="5">
    <source>
    </source>
</evidence>
<evidence type="ECO:0000305" key="6"/>
<evidence type="ECO:0000305" key="7">
    <source>
    </source>
</evidence>
<evidence type="ECO:0000305" key="8">
    <source>
    </source>
</evidence>
<evidence type="ECO:0000305" key="9">
    <source>
    </source>
</evidence>
<evidence type="ECO:0000305" key="10">
    <source>
    </source>
</evidence>
<sequence length="375" mass="42594">MKFELDTTDGRARRGRLVFDRGVVETPCFMPVGTYGTVKGMTPEEVEATGAQIILGNTFHLWLRPGQEIMKLHGDLHDFMQWKGPILTDSGGFQVFSLGDIRKITEQGVHFRNPINGDPIFLDPEKSMEIQYDLGSDIVMIFDECTPYPADWDYAKRSMEMSLRWAKRSRERFDSLGNKNALFGIIQGSVYEDLRDISVKGLVDIGFDGYAVGGLAVGEPKADMHRILEHVCPQIPADKPRYLMGVGKPEDLVEGVRRGIDMFDCVMPTRNARNGHLFVTDGVVKIRNAKYKSDTGPLDPECDCYTCRNYSRAYLHHLDRCNEILGARLNTIHNLRYYQRLMAGLRKAIEEGKLESFVTDFYQRQGREVPPLNVD</sequence>
<comment type="function">
    <text evidence="1 2 3">Catalyzes the base-exchange of a guanine (G) residue with the queuine precursor 7-aminomethyl-7-deazaguanine (PreQ1) at position 34 (anticodon wobble position) in tRNAs with GU(N) anticodons (tRNA-Asp, -Asn, -His and -Tyr). Catalysis occurs through a double-displacement mechanism. The nucleophile active site attacks the C1' of nucleotide 34 to detach the guanine base from the RNA, forming a covalent enzyme-RNA intermediate. The proton acceptor active site deprotonates the incoming PreQ1, allowing a nucleophilic attack on the C1' of the ribose to form the product. After dissociation, two additional enzymatic reactions on the tRNA convert PreQ1 to queuine (Q), resulting in the hypermodified nucleoside queuosine (7-(((4,5-cis-dihydroxy-2-cyclopenten-1-yl)amino)methyl)-7-deazaguanosine).</text>
</comment>
<comment type="catalytic activity">
    <reaction evidence="1 2 3">
        <text>7-aminomethyl-7-carbaguanine + guanosine(34) in tRNA = 7-aminomethyl-7-carbaguanosine(34) in tRNA + guanine</text>
        <dbReference type="Rhea" id="RHEA:24104"/>
        <dbReference type="Rhea" id="RHEA-COMP:10341"/>
        <dbReference type="Rhea" id="RHEA-COMP:10342"/>
        <dbReference type="ChEBI" id="CHEBI:16235"/>
        <dbReference type="ChEBI" id="CHEBI:58703"/>
        <dbReference type="ChEBI" id="CHEBI:74269"/>
        <dbReference type="ChEBI" id="CHEBI:82833"/>
        <dbReference type="EC" id="2.4.2.29"/>
    </reaction>
</comment>
<comment type="cofactor">
    <cofactor evidence="1 4">
        <name>Zn(2+)</name>
        <dbReference type="ChEBI" id="CHEBI:29105"/>
    </cofactor>
    <text evidence="1 4">Binds 1 zinc ion per subunit.</text>
</comment>
<comment type="biophysicochemical properties">
    <kinetics>
        <KM evidence="2">0.12 uM for tRNA(Tyr)</KM>
        <KM evidence="2">0.1 uM for guanine</KM>
        <text evidence="2">kcat is 0.00121 sec(-1) with tRNA(Tyr) and guanine as substrates.</text>
    </kinetics>
</comment>
<comment type="pathway">
    <text evidence="1 9">tRNA modification; tRNA-queuosine biosynthesis.</text>
</comment>
<comment type="subunit">
    <text evidence="1">Homodimer. Within each dimer, one monomer is responsible for RNA recognition and catalysis, while the other monomer binds to the replacement base PreQ1.</text>
</comment>
<comment type="similarity">
    <text evidence="1">Belongs to the queuine tRNA-ribosyltransferase family.</text>
</comment>
<dbReference type="EC" id="2.4.2.29" evidence="1 2 3"/>
<dbReference type="EMBL" id="M63939">
    <property type="protein sequence ID" value="AAA24667.1"/>
    <property type="molecule type" value="Genomic_DNA"/>
</dbReference>
<dbReference type="EMBL" id="U00096">
    <property type="protein sequence ID" value="AAC73509.1"/>
    <property type="molecule type" value="Genomic_DNA"/>
</dbReference>
<dbReference type="EMBL" id="AP009048">
    <property type="protein sequence ID" value="BAE76186.1"/>
    <property type="molecule type" value="Genomic_DNA"/>
</dbReference>
<dbReference type="EMBL" id="U82664">
    <property type="protein sequence ID" value="AAB40162.1"/>
    <property type="molecule type" value="Genomic_DNA"/>
</dbReference>
<dbReference type="EMBL" id="X56175">
    <property type="protein sequence ID" value="CAA39631.1"/>
    <property type="status" value="ALT_SEQ"/>
    <property type="molecule type" value="Genomic_DNA"/>
</dbReference>
<dbReference type="EMBL" id="X56175">
    <property type="protein sequence ID" value="CAA39632.1"/>
    <property type="status" value="ALT_SEQ"/>
    <property type="molecule type" value="Genomic_DNA"/>
</dbReference>
<dbReference type="EMBL" id="S68715">
    <property type="protein sequence ID" value="AAC60467.2"/>
    <property type="molecule type" value="Genomic_DNA"/>
</dbReference>
<dbReference type="PIR" id="C38530">
    <property type="entry name" value="C38530"/>
</dbReference>
<dbReference type="RefSeq" id="NP_414940.1">
    <property type="nucleotide sequence ID" value="NC_000913.3"/>
</dbReference>
<dbReference type="RefSeq" id="WP_000667319.1">
    <property type="nucleotide sequence ID" value="NZ_STEB01000007.1"/>
</dbReference>
<dbReference type="SMR" id="P0A847"/>
<dbReference type="BioGRID" id="4263531">
    <property type="interactions" value="28"/>
</dbReference>
<dbReference type="DIP" id="DIP-36020N"/>
<dbReference type="FunCoup" id="P0A847">
    <property type="interactions" value="863"/>
</dbReference>
<dbReference type="IntAct" id="P0A847">
    <property type="interactions" value="39"/>
</dbReference>
<dbReference type="STRING" id="511145.b0406"/>
<dbReference type="jPOST" id="P0A847"/>
<dbReference type="PaxDb" id="511145-b0406"/>
<dbReference type="EnsemblBacteria" id="AAC73509">
    <property type="protein sequence ID" value="AAC73509"/>
    <property type="gene ID" value="b0406"/>
</dbReference>
<dbReference type="GeneID" id="93777054"/>
<dbReference type="GeneID" id="949130"/>
<dbReference type="KEGG" id="ecj:JW0396"/>
<dbReference type="KEGG" id="eco:b0406"/>
<dbReference type="KEGG" id="ecoc:C3026_01975"/>
<dbReference type="PATRIC" id="fig|1411691.4.peg.1871"/>
<dbReference type="EchoBASE" id="EB0989"/>
<dbReference type="eggNOG" id="COG0343">
    <property type="taxonomic scope" value="Bacteria"/>
</dbReference>
<dbReference type="HOGENOM" id="CLU_022060_0_1_6"/>
<dbReference type="InParanoid" id="P0A847"/>
<dbReference type="OMA" id="IDLFDCV"/>
<dbReference type="OrthoDB" id="9805417at2"/>
<dbReference type="PhylomeDB" id="P0A847"/>
<dbReference type="BioCyc" id="EcoCyc:EG10996-MONOMER"/>
<dbReference type="BioCyc" id="MetaCyc:EG10996-MONOMER"/>
<dbReference type="BRENDA" id="2.4.2.29">
    <property type="organism ID" value="2026"/>
</dbReference>
<dbReference type="SABIO-RK" id="P0A847"/>
<dbReference type="UniPathway" id="UPA00392"/>
<dbReference type="PRO" id="PR:P0A847"/>
<dbReference type="Proteomes" id="UP000000625">
    <property type="component" value="Chromosome"/>
</dbReference>
<dbReference type="GO" id="GO:0005737">
    <property type="term" value="C:cytoplasm"/>
    <property type="evidence" value="ECO:0000318"/>
    <property type="project" value="GO_Central"/>
</dbReference>
<dbReference type="GO" id="GO:0005829">
    <property type="term" value="C:cytosol"/>
    <property type="evidence" value="ECO:0000314"/>
    <property type="project" value="EcoCyc"/>
</dbReference>
<dbReference type="GO" id="GO:0008479">
    <property type="term" value="F:tRNA-guanosine(34) queuine transglycosylase activity"/>
    <property type="evidence" value="ECO:0000314"/>
    <property type="project" value="EcoCyc"/>
</dbReference>
<dbReference type="GO" id="GO:0008270">
    <property type="term" value="F:zinc ion binding"/>
    <property type="evidence" value="ECO:0000314"/>
    <property type="project" value="EcoCyc"/>
</dbReference>
<dbReference type="GO" id="GO:0008616">
    <property type="term" value="P:queuosine biosynthetic process"/>
    <property type="evidence" value="ECO:0000315"/>
    <property type="project" value="EcoCyc"/>
</dbReference>
<dbReference type="GO" id="GO:0002099">
    <property type="term" value="P:tRNA wobble guanine modification"/>
    <property type="evidence" value="ECO:0000315"/>
    <property type="project" value="EcoCyc"/>
</dbReference>
<dbReference type="GO" id="GO:0101030">
    <property type="term" value="P:tRNA-guanine transglycosylation"/>
    <property type="evidence" value="ECO:0007669"/>
    <property type="project" value="InterPro"/>
</dbReference>
<dbReference type="FunFam" id="3.20.20.105:FF:000001">
    <property type="entry name" value="Queuine tRNA-ribosyltransferase"/>
    <property type="match status" value="1"/>
</dbReference>
<dbReference type="Gene3D" id="3.20.20.105">
    <property type="entry name" value="Queuine tRNA-ribosyltransferase-like"/>
    <property type="match status" value="1"/>
</dbReference>
<dbReference type="HAMAP" id="MF_00168">
    <property type="entry name" value="Q_tRNA_Tgt"/>
    <property type="match status" value="1"/>
</dbReference>
<dbReference type="InterPro" id="IPR050076">
    <property type="entry name" value="ArchSynthase1/Queuine_TRR"/>
</dbReference>
<dbReference type="InterPro" id="IPR004803">
    <property type="entry name" value="TGT"/>
</dbReference>
<dbReference type="InterPro" id="IPR036511">
    <property type="entry name" value="TGT-like_sf"/>
</dbReference>
<dbReference type="InterPro" id="IPR002616">
    <property type="entry name" value="tRNA_ribo_trans-like"/>
</dbReference>
<dbReference type="NCBIfam" id="TIGR00430">
    <property type="entry name" value="Q_tRNA_tgt"/>
    <property type="match status" value="1"/>
</dbReference>
<dbReference type="NCBIfam" id="TIGR00449">
    <property type="entry name" value="tgt_general"/>
    <property type="match status" value="1"/>
</dbReference>
<dbReference type="PANTHER" id="PTHR46499">
    <property type="entry name" value="QUEUINE TRNA-RIBOSYLTRANSFERASE"/>
    <property type="match status" value="1"/>
</dbReference>
<dbReference type="PANTHER" id="PTHR46499:SF1">
    <property type="entry name" value="QUEUINE TRNA-RIBOSYLTRANSFERASE"/>
    <property type="match status" value="1"/>
</dbReference>
<dbReference type="Pfam" id="PF01702">
    <property type="entry name" value="TGT"/>
    <property type="match status" value="1"/>
</dbReference>
<dbReference type="SUPFAM" id="SSF51713">
    <property type="entry name" value="tRNA-guanine transglycosylase"/>
    <property type="match status" value="1"/>
</dbReference>
<reference key="1">
    <citation type="journal article" date="1991" name="J. Bacteriol.">
        <title>Structure and organization of Escherichia coli genes involved in biosynthesis of the deazaguanine derivative queuine, a nutrient factor for eukaryotes.</title>
        <authorList>
            <person name="Reuter K."/>
            <person name="Slany R."/>
            <person name="Ullrich F."/>
            <person name="Kersten H."/>
        </authorList>
    </citation>
    <scope>NUCLEOTIDE SEQUENCE [GENOMIC DNA]</scope>
    <scope>PATHWAY</scope>
    <source>
        <strain>K12</strain>
    </source>
</reference>
<reference key="2">
    <citation type="journal article" date="1993" name="J. Mol. Biol.">
        <title>tRNA-guanine transglycosylase from Escherichia coli. Overexpression, purification and quaternary structure.</title>
        <authorList>
            <person name="Garcia G.A."/>
            <person name="Koch K.A."/>
            <person name="Chong S."/>
        </authorList>
    </citation>
    <scope>NUCLEOTIDE SEQUENCE [GENOMIC DNA]</scope>
    <scope>PROTEIN SEQUENCE OF 1-9</scope>
</reference>
<reference key="3">
    <citation type="submission" date="1997-01" db="EMBL/GenBank/DDBJ databases">
        <title>Sequence of minutes 4-25 of Escherichia coli.</title>
        <authorList>
            <person name="Chung E."/>
            <person name="Allen E."/>
            <person name="Araujo R."/>
            <person name="Aparicio A.M."/>
            <person name="Davis K."/>
            <person name="Duncan M."/>
            <person name="Federspiel N."/>
            <person name="Hyman R."/>
            <person name="Kalman S."/>
            <person name="Komp C."/>
            <person name="Kurdi O."/>
            <person name="Lew H."/>
            <person name="Lin D."/>
            <person name="Namath A."/>
            <person name="Oefner P."/>
            <person name="Roberts D."/>
            <person name="Schramm S."/>
            <person name="Davis R.W."/>
        </authorList>
    </citation>
    <scope>NUCLEOTIDE SEQUENCE [LARGE SCALE GENOMIC DNA]</scope>
    <source>
        <strain>K12 / MG1655 / ATCC 47076</strain>
    </source>
</reference>
<reference key="4">
    <citation type="journal article" date="1997" name="Science">
        <title>The complete genome sequence of Escherichia coli K-12.</title>
        <authorList>
            <person name="Blattner F.R."/>
            <person name="Plunkett G. III"/>
            <person name="Bloch C.A."/>
            <person name="Perna N.T."/>
            <person name="Burland V."/>
            <person name="Riley M."/>
            <person name="Collado-Vides J."/>
            <person name="Glasner J.D."/>
            <person name="Rode C.K."/>
            <person name="Mayhew G.F."/>
            <person name="Gregor J."/>
            <person name="Davis N.W."/>
            <person name="Kirkpatrick H.A."/>
            <person name="Goeden M.A."/>
            <person name="Rose D.J."/>
            <person name="Mau B."/>
            <person name="Shao Y."/>
        </authorList>
    </citation>
    <scope>NUCLEOTIDE SEQUENCE [LARGE SCALE GENOMIC DNA]</scope>
    <source>
        <strain>K12 / MG1655 / ATCC 47076</strain>
    </source>
</reference>
<reference key="5">
    <citation type="journal article" date="2006" name="Mol. Syst. Biol.">
        <title>Highly accurate genome sequences of Escherichia coli K-12 strains MG1655 and W3110.</title>
        <authorList>
            <person name="Hayashi K."/>
            <person name="Morooka N."/>
            <person name="Yamamoto Y."/>
            <person name="Fujita K."/>
            <person name="Isono K."/>
            <person name="Choi S."/>
            <person name="Ohtsubo E."/>
            <person name="Baba T."/>
            <person name="Wanner B.L."/>
            <person name="Mori H."/>
            <person name="Horiuchi T."/>
        </authorList>
    </citation>
    <scope>NUCLEOTIDE SEQUENCE [LARGE SCALE GENOMIC DNA]</scope>
    <source>
        <strain>K12 / W3110 / ATCC 27325 / DSM 5911</strain>
    </source>
</reference>
<reference key="6">
    <citation type="journal article" date="1990" name="EMBO J.">
        <title>The secD locus of E.coli codes for two membrane proteins required for protein export.</title>
        <authorList>
            <person name="Gardel C."/>
            <person name="Johnson K."/>
            <person name="Jacq A."/>
            <person name="Beckwith J."/>
        </authorList>
    </citation>
    <scope>PRELIMINARY NUCLEOTIDE SEQUENCE [GENOMIC DNA] OF 141-375</scope>
    <source>
        <strain>K12</strain>
    </source>
</reference>
<reference key="7">
    <citation type="journal article" date="1990" name="EMBO J.">
        <authorList>
            <person name="Gardel C."/>
            <person name="Johnson K."/>
            <person name="Jacq A."/>
            <person name="Beckwith J."/>
        </authorList>
    </citation>
    <scope>ERRATUM OF PUBMED:2170107</scope>
</reference>
<reference key="8">
    <citation type="journal article" date="1994" name="J. Bacteriol.">
        <title>Genetic and molecular characterization of the Escherichia coli secD operon and its products.</title>
        <authorList>
            <person name="Pogliano K.J."/>
            <person name="Beckwith J."/>
        </authorList>
    </citation>
    <scope>NUCLEOTIDE SEQUENCE [GENOMIC DNA] OF 281-375</scope>
</reference>
<reference key="9">
    <citation type="journal article" date="1994" name="Biochemistry">
        <title>Serine 90 is required for enzymic activity by tRNA-guanine transglycosylase from Escherichia coli.</title>
        <authorList>
            <person name="Reuter K."/>
            <person name="Chong S."/>
            <person name="Ullrich F."/>
            <person name="Kersten H."/>
            <person name="Garcia G.A."/>
        </authorList>
    </citation>
    <scope>MUTAGENESIS OF SER-90</scope>
</reference>
<reference key="10">
    <citation type="journal article" date="1995" name="Biochemistry">
        <title>tRNA-guanine transglycosylase from Escherichia coli is a zinc metalloprotein. Site-directed mutagenesis studies to identify the zinc ligands.</title>
        <authorList>
            <person name="Chong S."/>
            <person name="Curnow A.W."/>
            <person name="Huston T.J."/>
            <person name="Garcia G.A."/>
        </authorList>
    </citation>
    <scope>MUTAGENESIS OF ZINC LIGANDS</scope>
</reference>
<reference key="11">
    <citation type="journal article" date="1997" name="J. Protein Chem.">
        <title>Cysteine 265 is in the active site of, but is not essential for catalysis by tRNA-guanine transglycosylase (TGT) from Escherichia coli.</title>
        <authorList>
            <person name="Garcia G.A."/>
            <person name="Chong S."/>
        </authorList>
    </citation>
    <scope>ACTIVE SITE CYS-265</scope>
</reference>
<reference key="12">
    <citation type="journal article" date="2001" name="Biochemistry">
        <title>tRNA-guanine transglycosylase from Escherichia coli: molecular mechanism and role of aspartate 89.</title>
        <authorList>
            <person name="Kittendorf J.D."/>
            <person name="Barcomb L.M."/>
            <person name="Nonekowski S.T."/>
            <person name="Garcia G.A."/>
        </authorList>
    </citation>
    <scope>FUNCTION</scope>
    <scope>CATALYTIC ACTIVITY</scope>
    <scope>BIOPHYSICOCHEMICAL PROPERTIES</scope>
    <scope>ACTIVE SITE</scope>
</reference>
<reference key="13">
    <citation type="journal article" date="2003" name="J. Biol. Chem.">
        <title>An essential role for aspartate 264 in catalysis by tRNA-guanine transglycosylase from Escherichia coli.</title>
        <authorList>
            <person name="Kittendorf J.D."/>
            <person name="Sgraja T."/>
            <person name="Reuter K."/>
            <person name="Klebe G."/>
            <person name="Garcia G.A."/>
        </authorList>
    </citation>
    <scope>FUNCTION</scope>
    <scope>CATALYTIC ACTIVITY</scope>
    <scope>ACTIVE SITE</scope>
</reference>
<proteinExistence type="evidence at protein level"/>
<keyword id="KW-0903">Direct protein sequencing</keyword>
<keyword id="KW-0328">Glycosyltransferase</keyword>
<keyword id="KW-0479">Metal-binding</keyword>
<keyword id="KW-0671">Queuosine biosynthesis</keyword>
<keyword id="KW-1185">Reference proteome</keyword>
<keyword id="KW-0808">Transferase</keyword>
<keyword id="KW-0819">tRNA processing</keyword>
<keyword id="KW-0862">Zinc</keyword>